<proteinExistence type="evidence at protein level"/>
<evidence type="ECO:0000250" key="1">
    <source>
        <dbReference type="UniProtKB" id="P9WKK7"/>
    </source>
</evidence>
<evidence type="ECO:0000256" key="2">
    <source>
        <dbReference type="SAM" id="MobiDB-lite"/>
    </source>
</evidence>
<evidence type="ECO:0000269" key="3">
    <source>
    </source>
</evidence>
<evidence type="ECO:0000269" key="4">
    <source>
    </source>
</evidence>
<evidence type="ECO:0000269" key="5">
    <source>
    </source>
</evidence>
<evidence type="ECO:0000303" key="6">
    <source>
    </source>
</evidence>
<evidence type="ECO:0000305" key="7"/>
<evidence type="ECO:0000312" key="8">
    <source>
        <dbReference type="EMBL" id="BAC83656.1"/>
    </source>
</evidence>
<evidence type="ECO:0000312" key="9">
    <source>
        <dbReference type="EMBL" id="BAF21753.1"/>
    </source>
</evidence>
<evidence type="ECO:0000312" key="10">
    <source>
        <dbReference type="EMBL" id="EEE67304.1"/>
    </source>
</evidence>
<reference key="1">
    <citation type="journal article" date="2005" name="Nature">
        <title>The map-based sequence of the rice genome.</title>
        <authorList>
            <consortium name="International rice genome sequencing project (IRGSP)"/>
        </authorList>
    </citation>
    <scope>NUCLEOTIDE SEQUENCE [LARGE SCALE GENOMIC DNA]</scope>
    <source>
        <strain>cv. Nipponbare</strain>
    </source>
</reference>
<reference key="2">
    <citation type="journal article" date="2008" name="Nucleic Acids Res.">
        <title>The rice annotation project database (RAP-DB): 2008 update.</title>
        <authorList>
            <consortium name="The rice annotation project (RAP)"/>
        </authorList>
    </citation>
    <scope>GENOME REANNOTATION</scope>
    <source>
        <strain>cv. Nipponbare</strain>
    </source>
</reference>
<reference key="3">
    <citation type="journal article" date="2013" name="Rice">
        <title>Improvement of the Oryza sativa Nipponbare reference genome using next generation sequence and optical map data.</title>
        <authorList>
            <person name="Kawahara Y."/>
            <person name="de la Bastide M."/>
            <person name="Hamilton J.P."/>
            <person name="Kanamori H."/>
            <person name="McCombie W.R."/>
            <person name="Ouyang S."/>
            <person name="Schwartz D.C."/>
            <person name="Tanaka T."/>
            <person name="Wu J."/>
            <person name="Zhou S."/>
            <person name="Childs K.L."/>
            <person name="Davidson R.M."/>
            <person name="Lin H."/>
            <person name="Quesada-Ocampo L."/>
            <person name="Vaillancourt B."/>
            <person name="Sakai H."/>
            <person name="Lee S.S."/>
            <person name="Kim J."/>
            <person name="Numa H."/>
            <person name="Itoh T."/>
            <person name="Buell C.R."/>
            <person name="Matsumoto T."/>
        </authorList>
    </citation>
    <scope>GENOME REANNOTATION</scope>
    <source>
        <strain>cv. Nipponbare</strain>
    </source>
</reference>
<reference key="4">
    <citation type="journal article" date="2005" name="PLoS Biol.">
        <title>The genomes of Oryza sativa: a history of duplications.</title>
        <authorList>
            <person name="Yu J."/>
            <person name="Wang J."/>
            <person name="Lin W."/>
            <person name="Li S."/>
            <person name="Li H."/>
            <person name="Zhou J."/>
            <person name="Ni P."/>
            <person name="Dong W."/>
            <person name="Hu S."/>
            <person name="Zeng C."/>
            <person name="Zhang J."/>
            <person name="Zhang Y."/>
            <person name="Li R."/>
            <person name="Xu Z."/>
            <person name="Li S."/>
            <person name="Li X."/>
            <person name="Zheng H."/>
            <person name="Cong L."/>
            <person name="Lin L."/>
            <person name="Yin J."/>
            <person name="Geng J."/>
            <person name="Li G."/>
            <person name="Shi J."/>
            <person name="Liu J."/>
            <person name="Lv H."/>
            <person name="Li J."/>
            <person name="Wang J."/>
            <person name="Deng Y."/>
            <person name="Ran L."/>
            <person name="Shi X."/>
            <person name="Wang X."/>
            <person name="Wu Q."/>
            <person name="Li C."/>
            <person name="Ren X."/>
            <person name="Wang J."/>
            <person name="Wang X."/>
            <person name="Li D."/>
            <person name="Liu D."/>
            <person name="Zhang X."/>
            <person name="Ji Z."/>
            <person name="Zhao W."/>
            <person name="Sun Y."/>
            <person name="Zhang Z."/>
            <person name="Bao J."/>
            <person name="Han Y."/>
            <person name="Dong L."/>
            <person name="Ji J."/>
            <person name="Chen P."/>
            <person name="Wu S."/>
            <person name="Liu J."/>
            <person name="Xiao Y."/>
            <person name="Bu D."/>
            <person name="Tan J."/>
            <person name="Yang L."/>
            <person name="Ye C."/>
            <person name="Zhang J."/>
            <person name="Xu J."/>
            <person name="Zhou Y."/>
            <person name="Yu Y."/>
            <person name="Zhang B."/>
            <person name="Zhuang S."/>
            <person name="Wei H."/>
            <person name="Liu B."/>
            <person name="Lei M."/>
            <person name="Yu H."/>
            <person name="Li Y."/>
            <person name="Xu H."/>
            <person name="Wei S."/>
            <person name="He X."/>
            <person name="Fang L."/>
            <person name="Zhang Z."/>
            <person name="Zhang Y."/>
            <person name="Huang X."/>
            <person name="Su Z."/>
            <person name="Tong W."/>
            <person name="Li J."/>
            <person name="Tong Z."/>
            <person name="Li S."/>
            <person name="Ye J."/>
            <person name="Wang L."/>
            <person name="Fang L."/>
            <person name="Lei T."/>
            <person name="Chen C.-S."/>
            <person name="Chen H.-C."/>
            <person name="Xu Z."/>
            <person name="Li H."/>
            <person name="Huang H."/>
            <person name="Zhang F."/>
            <person name="Xu H."/>
            <person name="Li N."/>
            <person name="Zhao C."/>
            <person name="Li S."/>
            <person name="Dong L."/>
            <person name="Huang Y."/>
            <person name="Li L."/>
            <person name="Xi Y."/>
            <person name="Qi Q."/>
            <person name="Li W."/>
            <person name="Zhang B."/>
            <person name="Hu W."/>
            <person name="Zhang Y."/>
            <person name="Tian X."/>
            <person name="Jiao Y."/>
            <person name="Liang X."/>
            <person name="Jin J."/>
            <person name="Gao L."/>
            <person name="Zheng W."/>
            <person name="Hao B."/>
            <person name="Liu S.-M."/>
            <person name="Wang W."/>
            <person name="Yuan L."/>
            <person name="Cao M."/>
            <person name="McDermott J."/>
            <person name="Samudrala R."/>
            <person name="Wang J."/>
            <person name="Wong G.K.-S."/>
            <person name="Yang H."/>
        </authorList>
    </citation>
    <scope>NUCLEOTIDE SEQUENCE [LARGE SCALE GENOMIC DNA]</scope>
    <source>
        <strain>cv. Nipponbare</strain>
    </source>
</reference>
<reference key="5">
    <citation type="journal article" date="2001" name="J. Exp. Bot.">
        <title>Leaf senescence in rice plants: cloning and characterization of senescence up-regulated genes.</title>
        <authorList>
            <person name="Lee R.-H."/>
            <person name="Wang C.-H."/>
            <person name="Huang L.-T."/>
            <person name="Chen S.-C.G."/>
        </authorList>
    </citation>
    <scope>NUCLEOTIDE SEQUENCE [MRNA] OF 499-572</scope>
    <scope>TISSUE SPECIFICITY</scope>
    <scope>INDUCTION BY SENESCENCE</scope>
    <source>
        <strain>cv. Tainung 67</strain>
        <tissue>Leaf</tissue>
    </source>
</reference>
<reference key="6">
    <citation type="journal article" date="2005" name="Acta Biochim. Biophys. Sin.">
        <title>Anaerobic induction of isocitrate lyase and malate synthase in submerged rice seedlings indicates the important metabolic role of the glyoxylate cycle.</title>
        <authorList>
            <person name="Lu Y."/>
            <person name="Wu Y.R."/>
            <person name="Han B."/>
        </authorList>
    </citation>
    <scope>FUNCTION</scope>
    <scope>CATALYTIC ACTIVITY</scope>
    <scope>SUBCELLULAR LOCATION</scope>
    <scope>INDUCTION BY SUBMERGENCE</scope>
</reference>
<reference key="7">
    <citation type="journal article" date="2013" name="Plant Physiol.">
        <title>OsTZF1, a CCCH-tandem zinc finger protein, confers delayed senescence and stress tolerance in rice by regulating stress-related genes.</title>
        <authorList>
            <person name="Jan A."/>
            <person name="Maruyama K."/>
            <person name="Todaka D."/>
            <person name="Kidokoro S."/>
            <person name="Abo M."/>
            <person name="Yoshimura E."/>
            <person name="Shinozaki K."/>
            <person name="Nakashima K."/>
            <person name="Yamaguchi-Shinozaki K."/>
        </authorList>
    </citation>
    <scope>INDUCTION BY SENESCENCE</scope>
</reference>
<dbReference type="EC" id="4.1.3.1" evidence="4"/>
<dbReference type="EMBL" id="AP004990">
    <property type="protein sequence ID" value="BAC83656.1"/>
    <property type="molecule type" value="Genomic_DNA"/>
</dbReference>
<dbReference type="EMBL" id="AP008213">
    <property type="protein sequence ID" value="BAF21753.1"/>
    <property type="molecule type" value="Genomic_DNA"/>
</dbReference>
<dbReference type="EMBL" id="AP014963">
    <property type="protein sequence ID" value="BAT01864.1"/>
    <property type="molecule type" value="Genomic_DNA"/>
</dbReference>
<dbReference type="EMBL" id="CM000144">
    <property type="protein sequence ID" value="EEE67304.1"/>
    <property type="molecule type" value="Genomic_DNA"/>
</dbReference>
<dbReference type="EMBL" id="AF251075">
    <property type="protein sequence ID" value="AAL65398.1"/>
    <property type="molecule type" value="mRNA"/>
</dbReference>
<dbReference type="RefSeq" id="XP_015644942.1">
    <property type="nucleotide sequence ID" value="XM_015789456.1"/>
</dbReference>
<dbReference type="SMR" id="Q6Z6M4"/>
<dbReference type="FunCoup" id="Q6Z6M4">
    <property type="interactions" value="280"/>
</dbReference>
<dbReference type="STRING" id="39947.Q6Z6M4"/>
<dbReference type="PaxDb" id="39947-Q6Z6M4"/>
<dbReference type="EnsemblPlants" id="Os07t0529000-01">
    <property type="protein sequence ID" value="Os07t0529000-01"/>
    <property type="gene ID" value="Os07g0529000"/>
</dbReference>
<dbReference type="Gramene" id="Os07t0529000-01">
    <property type="protein sequence ID" value="Os07t0529000-01"/>
    <property type="gene ID" value="Os07g0529000"/>
</dbReference>
<dbReference type="KEGG" id="dosa:Os07g0529000"/>
<dbReference type="eggNOG" id="KOG1260">
    <property type="taxonomic scope" value="Eukaryota"/>
</dbReference>
<dbReference type="HOGENOM" id="CLU_019214_2_2_1"/>
<dbReference type="InParanoid" id="Q6Z6M4"/>
<dbReference type="OMA" id="YVSGWQV"/>
<dbReference type="OrthoDB" id="4078635at2759"/>
<dbReference type="UniPathway" id="UPA00703">
    <property type="reaction ID" value="UER00719"/>
</dbReference>
<dbReference type="Proteomes" id="UP000000763">
    <property type="component" value="Chromosome 7"/>
</dbReference>
<dbReference type="Proteomes" id="UP000007752">
    <property type="component" value="Chromosome 7"/>
</dbReference>
<dbReference type="Proteomes" id="UP000059680">
    <property type="component" value="Chromosome 7"/>
</dbReference>
<dbReference type="ExpressionAtlas" id="Q6Z6M4">
    <property type="expression patterns" value="baseline and differential"/>
</dbReference>
<dbReference type="GO" id="GO:0009514">
    <property type="term" value="C:glyoxysome"/>
    <property type="evidence" value="ECO:0000314"/>
    <property type="project" value="UniProtKB"/>
</dbReference>
<dbReference type="GO" id="GO:0004451">
    <property type="term" value="F:isocitrate lyase activity"/>
    <property type="evidence" value="ECO:0000314"/>
    <property type="project" value="UniProtKB"/>
</dbReference>
<dbReference type="GO" id="GO:0046872">
    <property type="term" value="F:metal ion binding"/>
    <property type="evidence" value="ECO:0007669"/>
    <property type="project" value="UniProtKB-KW"/>
</dbReference>
<dbReference type="GO" id="GO:0006097">
    <property type="term" value="P:glyoxylate cycle"/>
    <property type="evidence" value="ECO:0000303"/>
    <property type="project" value="UniProtKB"/>
</dbReference>
<dbReference type="GO" id="GO:0006099">
    <property type="term" value="P:tricarboxylic acid cycle"/>
    <property type="evidence" value="ECO:0007669"/>
    <property type="project" value="UniProtKB-KW"/>
</dbReference>
<dbReference type="CDD" id="cd00377">
    <property type="entry name" value="ICL_PEPM"/>
    <property type="match status" value="1"/>
</dbReference>
<dbReference type="FunFam" id="1.10.10.850:FF:000001">
    <property type="entry name" value="Isocitrate lyase"/>
    <property type="match status" value="1"/>
</dbReference>
<dbReference type="Gene3D" id="1.10.10.850">
    <property type="match status" value="1"/>
</dbReference>
<dbReference type="Gene3D" id="3.20.20.60">
    <property type="entry name" value="Phosphoenolpyruvate-binding domains"/>
    <property type="match status" value="1"/>
</dbReference>
<dbReference type="InterPro" id="IPR039556">
    <property type="entry name" value="ICL/PEPM"/>
</dbReference>
<dbReference type="InterPro" id="IPR006254">
    <property type="entry name" value="Isocitrate_lyase"/>
</dbReference>
<dbReference type="InterPro" id="IPR018523">
    <property type="entry name" value="Isocitrate_lyase_ph_CS"/>
</dbReference>
<dbReference type="InterPro" id="IPR015813">
    <property type="entry name" value="Pyrv/PenolPyrv_kinase-like_dom"/>
</dbReference>
<dbReference type="InterPro" id="IPR040442">
    <property type="entry name" value="Pyrv_kinase-like_dom_sf"/>
</dbReference>
<dbReference type="NCBIfam" id="TIGR01346">
    <property type="entry name" value="isocit_lyase"/>
    <property type="match status" value="1"/>
</dbReference>
<dbReference type="PANTHER" id="PTHR21631:SF3">
    <property type="entry name" value="BIFUNCTIONAL GLYOXYLATE CYCLE PROTEIN"/>
    <property type="match status" value="1"/>
</dbReference>
<dbReference type="PANTHER" id="PTHR21631">
    <property type="entry name" value="ISOCITRATE LYASE/MALATE SYNTHASE"/>
    <property type="match status" value="1"/>
</dbReference>
<dbReference type="Pfam" id="PF00463">
    <property type="entry name" value="ICL"/>
    <property type="match status" value="1"/>
</dbReference>
<dbReference type="PIRSF" id="PIRSF001362">
    <property type="entry name" value="Isocit_lyase"/>
    <property type="match status" value="1"/>
</dbReference>
<dbReference type="SUPFAM" id="SSF51621">
    <property type="entry name" value="Phosphoenolpyruvate/pyruvate domain"/>
    <property type="match status" value="1"/>
</dbReference>
<dbReference type="PROSITE" id="PS00161">
    <property type="entry name" value="ISOCITRATE_LYASE"/>
    <property type="match status" value="1"/>
</dbReference>
<keyword id="KW-0329">Glyoxylate bypass</keyword>
<keyword id="KW-0330">Glyoxysome</keyword>
<keyword id="KW-0456">Lyase</keyword>
<keyword id="KW-0460">Magnesium</keyword>
<keyword id="KW-0479">Metal-binding</keyword>
<keyword id="KW-0576">Peroxisome</keyword>
<keyword id="KW-1185">Reference proteome</keyword>
<keyword id="KW-0816">Tricarboxylic acid cycle</keyword>
<feature type="chain" id="PRO_0000430878" description="Isocitrate lyase">
    <location>
        <begin position="1"/>
        <end position="572"/>
    </location>
</feature>
<feature type="region of interest" description="Disordered" evidence="2">
    <location>
        <begin position="550"/>
        <end position="572"/>
    </location>
</feature>
<feature type="short sequence motif" description="Microbody targeting signal" evidence="7">
    <location>
        <begin position="570"/>
        <end position="572"/>
    </location>
</feature>
<feature type="active site" description="Proton acceptor" evidence="7">
    <location>
        <position position="213"/>
    </location>
</feature>
<feature type="binding site" evidence="1">
    <location>
        <begin position="104"/>
        <end position="106"/>
    </location>
    <ligand>
        <name>substrate</name>
    </ligand>
</feature>
<feature type="binding site" evidence="1">
    <location>
        <position position="175"/>
    </location>
    <ligand>
        <name>Mg(2+)</name>
        <dbReference type="ChEBI" id="CHEBI:18420"/>
    </ligand>
</feature>
<feature type="binding site" evidence="1">
    <location>
        <begin position="214"/>
        <end position="215"/>
    </location>
    <ligand>
        <name>substrate</name>
    </ligand>
</feature>
<feature type="binding site" evidence="1">
    <location>
        <position position="250"/>
    </location>
    <ligand>
        <name>substrate</name>
    </ligand>
</feature>
<feature type="binding site" evidence="1">
    <location>
        <begin position="437"/>
        <end position="441"/>
    </location>
    <ligand>
        <name>substrate</name>
    </ligand>
</feature>
<feature type="binding site" evidence="1">
    <location>
        <position position="472"/>
    </location>
    <ligand>
        <name>substrate</name>
    </ligand>
</feature>
<gene>
    <name evidence="6" type="primary">ICL</name>
    <name evidence="9" type="ordered locus">Os07g0529000</name>
    <name evidence="7" type="ordered locus">LOC_Os07g34520</name>
    <name evidence="10" type="ORF">OsJ_24528</name>
    <name evidence="8" type="ORF">OSJNBa0007H12.39</name>
</gene>
<organism>
    <name type="scientific">Oryza sativa subsp. japonica</name>
    <name type="common">Rice</name>
    <dbReference type="NCBI Taxonomy" id="39947"/>
    <lineage>
        <taxon>Eukaryota</taxon>
        <taxon>Viridiplantae</taxon>
        <taxon>Streptophyta</taxon>
        <taxon>Embryophyta</taxon>
        <taxon>Tracheophyta</taxon>
        <taxon>Spermatophyta</taxon>
        <taxon>Magnoliopsida</taxon>
        <taxon>Liliopsida</taxon>
        <taxon>Poales</taxon>
        <taxon>Poaceae</taxon>
        <taxon>BOP clade</taxon>
        <taxon>Oryzoideae</taxon>
        <taxon>Oryzeae</taxon>
        <taxon>Oryzinae</taxon>
        <taxon>Oryza</taxon>
        <taxon>Oryza sativa</taxon>
    </lineage>
</organism>
<sequence>MSSPFSVPSLIMEEEGRFEAEVAEVEAWWGTDRFRLTKRPYTARDVALLRGTLRQSYASGDMAKKLWRTLRAHQANGTASRTFGALDPVQVAMMAKHLDTVYVSGWQCSSTHTSTNEPGPDLADYPYDTVPNKVEHLFFAQLYHDRKQREARMSMSRAERAHEPYVDYLKPIIADGDTGFGGATATVKLCKLFVERGAAGVHLEDQSSVTKKCGHMAGKVLVAVSEHVNRLVAARLQFDIMGVETVLVARTDAVAATLIQTNVDARDHQFILGATNPRLRNRSLAAVLSDAMSAGKNGRELQAIEDEWLATAQLKTFSDCVRDAIASLNATDADKQRKLQEWSAATSHDKCVPLEQARDIAAGLGVTSLFWDWDLPRTREGFYRFRGSVAAAVVRGRAFAPHADVLWMETSSPNIAECTAFAEGVRAASPGAMLAYNLSPSFNWDASGMTDADMSEFIPRVARLGYVWQFITLAGFHADALVTDTFARDFARRGMLAYVERIQREERSNGVETLQHQKWSGANFYDRVLKTVQGGISSTAAMGKGVTEEQFKGSWTGPGSESSSHVLAKSRM</sequence>
<accession>Q6Z6M4</accession>
<accession>Q8W2F9</accession>
<protein>
    <recommendedName>
        <fullName evidence="6">Isocitrate lyase</fullName>
        <shortName evidence="6">ICL</shortName>
        <ecNumber evidence="4">4.1.3.1</ecNumber>
    </recommendedName>
    <alternativeName>
        <fullName evidence="7">Isocitrase</fullName>
    </alternativeName>
    <alternativeName>
        <fullName evidence="7">Isocitratase</fullName>
    </alternativeName>
</protein>
<comment type="function">
    <text evidence="4">Involved in storage lipid mobilization during the growth of higher plant seedling.</text>
</comment>
<comment type="catalytic activity">
    <reaction evidence="4">
        <text>D-threo-isocitrate = glyoxylate + succinate</text>
        <dbReference type="Rhea" id="RHEA:13245"/>
        <dbReference type="ChEBI" id="CHEBI:15562"/>
        <dbReference type="ChEBI" id="CHEBI:30031"/>
        <dbReference type="ChEBI" id="CHEBI:36655"/>
        <dbReference type="EC" id="4.1.3.1"/>
    </reaction>
</comment>
<comment type="cofactor">
    <cofactor evidence="1">
        <name>Mg(2+)</name>
        <dbReference type="ChEBI" id="CHEBI:18420"/>
    </cofactor>
</comment>
<comment type="pathway">
    <text evidence="7">Carbohydrate metabolism; glyoxylate cycle; (S)-malate from isocitrate: step 1/2.</text>
</comment>
<comment type="subcellular location">
    <subcellularLocation>
        <location evidence="4">Glyoxysome</location>
    </subcellularLocation>
</comment>
<comment type="tissue specificity">
    <text evidence="3">Expressed in leaves.</text>
</comment>
<comment type="induction">
    <text evidence="3 4 5">By submergence in seedlings (PubMed:15944756). By dark-induced senescence in leaves (PubMed:11432928, PubMed:23296688).</text>
</comment>
<comment type="similarity">
    <text evidence="7">Belongs to the isocitrate lyase/PEP mutase superfamily. Isocitrate lyase family.</text>
</comment>
<name>ACEA_ORYSJ</name>